<proteinExistence type="predicted"/>
<sequence length="256" mass="29980">MLSAILHGKKTGSGLAGRQFKIGETQGAEDLLTATIFERISYLPNNTFQEVIKKLFDDKEDIGNLQNIEYWPKWMNKNRFIEPDVVLTGTNGKNIIIEAKRYDNTQQQYAIQLANEIMSYYDSTGLSNPILLAIGGMDSYDKKRVEKIKKEIKNILIQNSFNREFTLYCISWKKLYQILESSIHQSEIFLQRILSDIREAYIWHGVRYKSIQWLKSLKRNDIIHISIPIKIRIEKKWIELKKMNISKTHFPSFLGE</sequence>
<protein>
    <recommendedName>
        <fullName>Uncharacterized protein PM0110</fullName>
    </recommendedName>
</protein>
<accession>Q9CPD7</accession>
<organism>
    <name type="scientific">Pasteurella multocida (strain Pm70)</name>
    <dbReference type="NCBI Taxonomy" id="272843"/>
    <lineage>
        <taxon>Bacteria</taxon>
        <taxon>Pseudomonadati</taxon>
        <taxon>Pseudomonadota</taxon>
        <taxon>Gammaproteobacteria</taxon>
        <taxon>Pasteurellales</taxon>
        <taxon>Pasteurellaceae</taxon>
        <taxon>Pasteurella</taxon>
    </lineage>
</organism>
<gene>
    <name type="ordered locus">PM0110</name>
</gene>
<feature type="chain" id="PRO_0000216286" description="Uncharacterized protein PM0110">
    <location>
        <begin position="1"/>
        <end position="256"/>
    </location>
</feature>
<name>Y110_PASMU</name>
<reference key="1">
    <citation type="journal article" date="2001" name="Proc. Natl. Acad. Sci. U.S.A.">
        <title>Complete genomic sequence of Pasteurella multocida Pm70.</title>
        <authorList>
            <person name="May B.J."/>
            <person name="Zhang Q."/>
            <person name="Li L.L."/>
            <person name="Paustian M.L."/>
            <person name="Whittam T.S."/>
            <person name="Kapur V."/>
        </authorList>
    </citation>
    <scope>NUCLEOTIDE SEQUENCE [LARGE SCALE GENOMIC DNA]</scope>
    <source>
        <strain>Pm70</strain>
    </source>
</reference>
<keyword id="KW-1185">Reference proteome</keyword>
<dbReference type="EMBL" id="AE004439">
    <property type="protein sequence ID" value="AAK02194.1"/>
    <property type="molecule type" value="Genomic_DNA"/>
</dbReference>
<dbReference type="RefSeq" id="WP_010906488.1">
    <property type="nucleotide sequence ID" value="NC_002663.1"/>
</dbReference>
<dbReference type="STRING" id="272843.PM0110"/>
<dbReference type="EnsemblBacteria" id="AAK02194">
    <property type="protein sequence ID" value="AAK02194"/>
    <property type="gene ID" value="PM0110"/>
</dbReference>
<dbReference type="KEGG" id="pmu:PM0110"/>
<dbReference type="PATRIC" id="fig|272843.6.peg.114"/>
<dbReference type="HOGENOM" id="CLU_088864_0_0_6"/>
<dbReference type="OrthoDB" id="8370100at2"/>
<dbReference type="Proteomes" id="UP000000809">
    <property type="component" value="Chromosome"/>
</dbReference>